<evidence type="ECO:0000255" key="1">
    <source>
        <dbReference type="HAMAP-Rule" id="MF_00235"/>
    </source>
</evidence>
<reference key="1">
    <citation type="submission" date="2007-10" db="EMBL/GenBank/DDBJ databases">
        <title>Complete genome of Alkaliphilus oremlandii OhILAs.</title>
        <authorList>
            <person name="Copeland A."/>
            <person name="Lucas S."/>
            <person name="Lapidus A."/>
            <person name="Barry K."/>
            <person name="Detter J.C."/>
            <person name="Glavina del Rio T."/>
            <person name="Hammon N."/>
            <person name="Israni S."/>
            <person name="Dalin E."/>
            <person name="Tice H."/>
            <person name="Pitluck S."/>
            <person name="Chain P."/>
            <person name="Malfatti S."/>
            <person name="Shin M."/>
            <person name="Vergez L."/>
            <person name="Schmutz J."/>
            <person name="Larimer F."/>
            <person name="Land M."/>
            <person name="Hauser L."/>
            <person name="Kyrpides N."/>
            <person name="Mikhailova N."/>
            <person name="Stolz J.F."/>
            <person name="Dawson A."/>
            <person name="Fisher E."/>
            <person name="Crable B."/>
            <person name="Perera E."/>
            <person name="Lisak J."/>
            <person name="Ranganathan M."/>
            <person name="Basu P."/>
            <person name="Richardson P."/>
        </authorList>
    </citation>
    <scope>NUCLEOTIDE SEQUENCE [LARGE SCALE GENOMIC DNA]</scope>
    <source>
        <strain>OhILAs</strain>
    </source>
</reference>
<keyword id="KW-0067">ATP-binding</keyword>
<keyword id="KW-0963">Cytoplasm</keyword>
<keyword id="KW-0418">Kinase</keyword>
<keyword id="KW-0479">Metal-binding</keyword>
<keyword id="KW-0545">Nucleotide biosynthesis</keyword>
<keyword id="KW-0547">Nucleotide-binding</keyword>
<keyword id="KW-1185">Reference proteome</keyword>
<keyword id="KW-0808">Transferase</keyword>
<keyword id="KW-0862">Zinc</keyword>
<name>KAD_ALKOO</name>
<feature type="chain" id="PRO_1000058781" description="Adenylate kinase">
    <location>
        <begin position="1"/>
        <end position="216"/>
    </location>
</feature>
<feature type="region of interest" description="NMP" evidence="1">
    <location>
        <begin position="30"/>
        <end position="59"/>
    </location>
</feature>
<feature type="region of interest" description="LID" evidence="1">
    <location>
        <begin position="126"/>
        <end position="163"/>
    </location>
</feature>
<feature type="binding site" evidence="1">
    <location>
        <begin position="10"/>
        <end position="15"/>
    </location>
    <ligand>
        <name>ATP</name>
        <dbReference type="ChEBI" id="CHEBI:30616"/>
    </ligand>
</feature>
<feature type="binding site" evidence="1">
    <location>
        <position position="31"/>
    </location>
    <ligand>
        <name>AMP</name>
        <dbReference type="ChEBI" id="CHEBI:456215"/>
    </ligand>
</feature>
<feature type="binding site" evidence="1">
    <location>
        <position position="36"/>
    </location>
    <ligand>
        <name>AMP</name>
        <dbReference type="ChEBI" id="CHEBI:456215"/>
    </ligand>
</feature>
<feature type="binding site" evidence="1">
    <location>
        <begin position="57"/>
        <end position="59"/>
    </location>
    <ligand>
        <name>AMP</name>
        <dbReference type="ChEBI" id="CHEBI:456215"/>
    </ligand>
</feature>
<feature type="binding site" evidence="1">
    <location>
        <begin position="85"/>
        <end position="88"/>
    </location>
    <ligand>
        <name>AMP</name>
        <dbReference type="ChEBI" id="CHEBI:456215"/>
    </ligand>
</feature>
<feature type="binding site" evidence="1">
    <location>
        <position position="92"/>
    </location>
    <ligand>
        <name>AMP</name>
        <dbReference type="ChEBI" id="CHEBI:456215"/>
    </ligand>
</feature>
<feature type="binding site" evidence="1">
    <location>
        <position position="127"/>
    </location>
    <ligand>
        <name>ATP</name>
        <dbReference type="ChEBI" id="CHEBI:30616"/>
    </ligand>
</feature>
<feature type="binding site" evidence="1">
    <location>
        <position position="130"/>
    </location>
    <ligand>
        <name>Zn(2+)</name>
        <dbReference type="ChEBI" id="CHEBI:29105"/>
        <note>structural</note>
    </ligand>
</feature>
<feature type="binding site" evidence="1">
    <location>
        <position position="133"/>
    </location>
    <ligand>
        <name>Zn(2+)</name>
        <dbReference type="ChEBI" id="CHEBI:29105"/>
        <note>structural</note>
    </ligand>
</feature>
<feature type="binding site" evidence="1">
    <location>
        <begin position="136"/>
        <end position="137"/>
    </location>
    <ligand>
        <name>ATP</name>
        <dbReference type="ChEBI" id="CHEBI:30616"/>
    </ligand>
</feature>
<feature type="binding site" evidence="1">
    <location>
        <position position="150"/>
    </location>
    <ligand>
        <name>Zn(2+)</name>
        <dbReference type="ChEBI" id="CHEBI:29105"/>
        <note>structural</note>
    </ligand>
</feature>
<feature type="binding site" evidence="1">
    <location>
        <position position="153"/>
    </location>
    <ligand>
        <name>Zn(2+)</name>
        <dbReference type="ChEBI" id="CHEBI:29105"/>
        <note>structural</note>
    </ligand>
</feature>
<feature type="binding site" evidence="1">
    <location>
        <position position="160"/>
    </location>
    <ligand>
        <name>AMP</name>
        <dbReference type="ChEBI" id="CHEBI:456215"/>
    </ligand>
</feature>
<feature type="binding site" evidence="1">
    <location>
        <position position="171"/>
    </location>
    <ligand>
        <name>AMP</name>
        <dbReference type="ChEBI" id="CHEBI:456215"/>
    </ligand>
</feature>
<feature type="binding site" evidence="1">
    <location>
        <position position="199"/>
    </location>
    <ligand>
        <name>ATP</name>
        <dbReference type="ChEBI" id="CHEBI:30616"/>
    </ligand>
</feature>
<accession>A8MLG1</accession>
<gene>
    <name evidence="1" type="primary">adk</name>
    <name type="ordered locus">Clos_0513</name>
</gene>
<organism>
    <name type="scientific">Alkaliphilus oremlandii (strain OhILAs)</name>
    <name type="common">Clostridium oremlandii (strain OhILAs)</name>
    <dbReference type="NCBI Taxonomy" id="350688"/>
    <lineage>
        <taxon>Bacteria</taxon>
        <taxon>Bacillati</taxon>
        <taxon>Bacillota</taxon>
        <taxon>Clostridia</taxon>
        <taxon>Peptostreptococcales</taxon>
        <taxon>Natronincolaceae</taxon>
        <taxon>Alkaliphilus</taxon>
    </lineage>
</organism>
<comment type="function">
    <text evidence="1">Catalyzes the reversible transfer of the terminal phosphate group between ATP and AMP. Plays an important role in cellular energy homeostasis and in adenine nucleotide metabolism.</text>
</comment>
<comment type="catalytic activity">
    <reaction evidence="1">
        <text>AMP + ATP = 2 ADP</text>
        <dbReference type="Rhea" id="RHEA:12973"/>
        <dbReference type="ChEBI" id="CHEBI:30616"/>
        <dbReference type="ChEBI" id="CHEBI:456215"/>
        <dbReference type="ChEBI" id="CHEBI:456216"/>
        <dbReference type="EC" id="2.7.4.3"/>
    </reaction>
</comment>
<comment type="pathway">
    <text evidence="1">Purine metabolism; AMP biosynthesis via salvage pathway; AMP from ADP: step 1/1.</text>
</comment>
<comment type="subunit">
    <text evidence="1">Monomer.</text>
</comment>
<comment type="subcellular location">
    <subcellularLocation>
        <location evidence="1">Cytoplasm</location>
    </subcellularLocation>
</comment>
<comment type="domain">
    <text evidence="1">Consists of three domains, a large central CORE domain and two small peripheral domains, NMPbind and LID, which undergo movements during catalysis. The LID domain closes over the site of phosphoryl transfer upon ATP binding. Assembling and dissambling the active center during each catalytic cycle provides an effective means to prevent ATP hydrolysis. Some bacteria have evolved a zinc-coordinating structure that stabilizes the LID domain.</text>
</comment>
<comment type="similarity">
    <text evidence="1">Belongs to the adenylate kinase family.</text>
</comment>
<protein>
    <recommendedName>
        <fullName evidence="1">Adenylate kinase</fullName>
        <shortName evidence="1">AK</shortName>
        <ecNumber evidence="1">2.7.4.3</ecNumber>
    </recommendedName>
    <alternativeName>
        <fullName evidence="1">ATP-AMP transphosphorylase</fullName>
    </alternativeName>
    <alternativeName>
        <fullName evidence="1">ATP:AMP phosphotransferase</fullName>
    </alternativeName>
    <alternativeName>
        <fullName evidence="1">Adenylate monophosphate kinase</fullName>
    </alternativeName>
</protein>
<proteinExistence type="inferred from homology"/>
<sequence length="216" mass="24110">MRLILLGPPGAGKGTQAASIVEKYHIPHISTGDIFRYNIKQGTELGKKAKSYMDQGLLVPDEVVVEIVEDRLKKEDCENGFLLDGFPRTVVQAEALDKALVDMNISLDKVINIQVDKERLIERAVGRRICRECGATFHVQYNPSTKGALCDQCGGELYQRDDDNEETVTRRIEVYLSETTPLVEYYSSQNKLVTIDGDKKINEVFANIVTSLGSDL</sequence>
<dbReference type="EC" id="2.7.4.3" evidence="1"/>
<dbReference type="EMBL" id="CP000853">
    <property type="protein sequence ID" value="ABW18075.1"/>
    <property type="molecule type" value="Genomic_DNA"/>
</dbReference>
<dbReference type="RefSeq" id="WP_012158389.1">
    <property type="nucleotide sequence ID" value="NC_009922.1"/>
</dbReference>
<dbReference type="SMR" id="A8MLG1"/>
<dbReference type="STRING" id="350688.Clos_0513"/>
<dbReference type="KEGG" id="aoe:Clos_0513"/>
<dbReference type="eggNOG" id="COG0563">
    <property type="taxonomic scope" value="Bacteria"/>
</dbReference>
<dbReference type="HOGENOM" id="CLU_032354_1_2_9"/>
<dbReference type="OrthoDB" id="9805030at2"/>
<dbReference type="UniPathway" id="UPA00588">
    <property type="reaction ID" value="UER00649"/>
</dbReference>
<dbReference type="Proteomes" id="UP000000269">
    <property type="component" value="Chromosome"/>
</dbReference>
<dbReference type="GO" id="GO:0005737">
    <property type="term" value="C:cytoplasm"/>
    <property type="evidence" value="ECO:0007669"/>
    <property type="project" value="UniProtKB-SubCell"/>
</dbReference>
<dbReference type="GO" id="GO:0004017">
    <property type="term" value="F:adenylate kinase activity"/>
    <property type="evidence" value="ECO:0007669"/>
    <property type="project" value="UniProtKB-UniRule"/>
</dbReference>
<dbReference type="GO" id="GO:0005524">
    <property type="term" value="F:ATP binding"/>
    <property type="evidence" value="ECO:0007669"/>
    <property type="project" value="UniProtKB-UniRule"/>
</dbReference>
<dbReference type="GO" id="GO:0008270">
    <property type="term" value="F:zinc ion binding"/>
    <property type="evidence" value="ECO:0007669"/>
    <property type="project" value="UniProtKB-UniRule"/>
</dbReference>
<dbReference type="GO" id="GO:0044209">
    <property type="term" value="P:AMP salvage"/>
    <property type="evidence" value="ECO:0007669"/>
    <property type="project" value="UniProtKB-UniRule"/>
</dbReference>
<dbReference type="CDD" id="cd01428">
    <property type="entry name" value="ADK"/>
    <property type="match status" value="1"/>
</dbReference>
<dbReference type="FunFam" id="3.40.50.300:FF:000106">
    <property type="entry name" value="Adenylate kinase mitochondrial"/>
    <property type="match status" value="1"/>
</dbReference>
<dbReference type="Gene3D" id="3.40.50.300">
    <property type="entry name" value="P-loop containing nucleotide triphosphate hydrolases"/>
    <property type="match status" value="1"/>
</dbReference>
<dbReference type="HAMAP" id="MF_00235">
    <property type="entry name" value="Adenylate_kinase_Adk"/>
    <property type="match status" value="1"/>
</dbReference>
<dbReference type="InterPro" id="IPR006259">
    <property type="entry name" value="Adenyl_kin_sub"/>
</dbReference>
<dbReference type="InterPro" id="IPR000850">
    <property type="entry name" value="Adenylat/UMP-CMP_kin"/>
</dbReference>
<dbReference type="InterPro" id="IPR033690">
    <property type="entry name" value="Adenylat_kinase_CS"/>
</dbReference>
<dbReference type="InterPro" id="IPR007862">
    <property type="entry name" value="Adenylate_kinase_lid-dom"/>
</dbReference>
<dbReference type="InterPro" id="IPR027417">
    <property type="entry name" value="P-loop_NTPase"/>
</dbReference>
<dbReference type="NCBIfam" id="TIGR01351">
    <property type="entry name" value="adk"/>
    <property type="match status" value="1"/>
</dbReference>
<dbReference type="NCBIfam" id="NF001380">
    <property type="entry name" value="PRK00279.1-2"/>
    <property type="match status" value="1"/>
</dbReference>
<dbReference type="NCBIfam" id="NF001381">
    <property type="entry name" value="PRK00279.1-3"/>
    <property type="match status" value="1"/>
</dbReference>
<dbReference type="NCBIfam" id="NF011100">
    <property type="entry name" value="PRK14527.1"/>
    <property type="match status" value="1"/>
</dbReference>
<dbReference type="PANTHER" id="PTHR23359">
    <property type="entry name" value="NUCLEOTIDE KINASE"/>
    <property type="match status" value="1"/>
</dbReference>
<dbReference type="Pfam" id="PF00406">
    <property type="entry name" value="ADK"/>
    <property type="match status" value="1"/>
</dbReference>
<dbReference type="Pfam" id="PF05191">
    <property type="entry name" value="ADK_lid"/>
    <property type="match status" value="1"/>
</dbReference>
<dbReference type="PRINTS" id="PR00094">
    <property type="entry name" value="ADENYLTKNASE"/>
</dbReference>
<dbReference type="SUPFAM" id="SSF52540">
    <property type="entry name" value="P-loop containing nucleoside triphosphate hydrolases"/>
    <property type="match status" value="1"/>
</dbReference>
<dbReference type="PROSITE" id="PS00113">
    <property type="entry name" value="ADENYLATE_KINASE"/>
    <property type="match status" value="1"/>
</dbReference>